<organism>
    <name type="scientific">Yersinia pseudotuberculosis serotype I (strain IP32953)</name>
    <dbReference type="NCBI Taxonomy" id="273123"/>
    <lineage>
        <taxon>Bacteria</taxon>
        <taxon>Pseudomonadati</taxon>
        <taxon>Pseudomonadota</taxon>
        <taxon>Gammaproteobacteria</taxon>
        <taxon>Enterobacterales</taxon>
        <taxon>Yersiniaceae</taxon>
        <taxon>Yersinia</taxon>
    </lineage>
</organism>
<feature type="chain" id="PRO_0000268916" description="Sigma factor-binding protein Crl">
    <location>
        <begin position="1"/>
        <end position="133"/>
    </location>
</feature>
<feature type="region of interest" description="Essential for activity">
    <location>
        <begin position="99"/>
        <end position="122"/>
    </location>
</feature>
<sequence length="133" mass="15386">MTLTSAHPKSKLMKRFAALGPYLREGQCQNDHFFFDCLAVCINVKLAPEKREFWGWWIELEPSAGRFTYVYQLGLFNKEGNWNAEKISDPEVQDKLESTLRSFHLRLEEMLASIDMKLEPAADFNDQPVKLSA</sequence>
<accession>Q66DZ0</accession>
<evidence type="ECO:0000255" key="1">
    <source>
        <dbReference type="HAMAP-Rule" id="MF_01178"/>
    </source>
</evidence>
<protein>
    <recommendedName>
        <fullName evidence="1">Sigma factor-binding protein Crl</fullName>
    </recommendedName>
</protein>
<keyword id="KW-0010">Activator</keyword>
<keyword id="KW-0963">Cytoplasm</keyword>
<keyword id="KW-0804">Transcription</keyword>
<keyword id="KW-0805">Transcription regulation</keyword>
<gene>
    <name evidence="1" type="primary">crl</name>
    <name type="ordered locus">YPTB0903</name>
</gene>
<name>CRL_YERPS</name>
<comment type="function">
    <text evidence="1">Binds to the sigma-S subunit of RNA polymerase, activating expression of sigma-S-regulated genes. Stimulates RNA polymerase holoenzyme formation and may bind to several other sigma factors, such as sigma-70 and sigma-32.</text>
</comment>
<comment type="subcellular location">
    <subcellularLocation>
        <location evidence="1">Cytoplasm</location>
    </subcellularLocation>
</comment>
<comment type="similarity">
    <text evidence="1">Belongs to the Crl family.</text>
</comment>
<proteinExistence type="inferred from homology"/>
<dbReference type="EMBL" id="BX936398">
    <property type="protein sequence ID" value="CAH20143.1"/>
    <property type="molecule type" value="Genomic_DNA"/>
</dbReference>
<dbReference type="RefSeq" id="WP_002208702.1">
    <property type="nucleotide sequence ID" value="NZ_CP009712.1"/>
</dbReference>
<dbReference type="SMR" id="Q66DZ0"/>
<dbReference type="GeneID" id="57975495"/>
<dbReference type="KEGG" id="ypo:BZ17_1643"/>
<dbReference type="KEGG" id="yps:YPTB0903"/>
<dbReference type="PATRIC" id="fig|273123.14.peg.1746"/>
<dbReference type="Proteomes" id="UP000001011">
    <property type="component" value="Chromosome"/>
</dbReference>
<dbReference type="GO" id="GO:0005737">
    <property type="term" value="C:cytoplasm"/>
    <property type="evidence" value="ECO:0007669"/>
    <property type="project" value="UniProtKB-SubCell"/>
</dbReference>
<dbReference type="GO" id="GO:0045893">
    <property type="term" value="P:positive regulation of DNA-templated transcription"/>
    <property type="evidence" value="ECO:0007669"/>
    <property type="project" value="UniProtKB-UniRule"/>
</dbReference>
<dbReference type="Gene3D" id="3.30.310.230">
    <property type="entry name" value="Sigma factor-binding protein Crl monomer"/>
    <property type="match status" value="1"/>
</dbReference>
<dbReference type="HAMAP" id="MF_01178">
    <property type="entry name" value="Crl"/>
    <property type="match status" value="1"/>
</dbReference>
<dbReference type="InterPro" id="IPR009986">
    <property type="entry name" value="Tscrpt_reg_Crl"/>
</dbReference>
<dbReference type="InterPro" id="IPR038208">
    <property type="entry name" value="Tscrpt_reg_Crl_sf"/>
</dbReference>
<dbReference type="NCBIfam" id="NF008217">
    <property type="entry name" value="PRK10984.1"/>
    <property type="match status" value="1"/>
</dbReference>
<dbReference type="Pfam" id="PF07417">
    <property type="entry name" value="Crl"/>
    <property type="match status" value="1"/>
</dbReference>
<reference key="1">
    <citation type="journal article" date="2004" name="Proc. Natl. Acad. Sci. U.S.A.">
        <title>Insights into the evolution of Yersinia pestis through whole-genome comparison with Yersinia pseudotuberculosis.</title>
        <authorList>
            <person name="Chain P.S.G."/>
            <person name="Carniel E."/>
            <person name="Larimer F.W."/>
            <person name="Lamerdin J."/>
            <person name="Stoutland P.O."/>
            <person name="Regala W.M."/>
            <person name="Georgescu A.M."/>
            <person name="Vergez L.M."/>
            <person name="Land M.L."/>
            <person name="Motin V.L."/>
            <person name="Brubaker R.R."/>
            <person name="Fowler J."/>
            <person name="Hinnebusch J."/>
            <person name="Marceau M."/>
            <person name="Medigue C."/>
            <person name="Simonet M."/>
            <person name="Chenal-Francisque V."/>
            <person name="Souza B."/>
            <person name="Dacheux D."/>
            <person name="Elliott J.M."/>
            <person name="Derbise A."/>
            <person name="Hauser L.J."/>
            <person name="Garcia E."/>
        </authorList>
    </citation>
    <scope>NUCLEOTIDE SEQUENCE [LARGE SCALE GENOMIC DNA]</scope>
    <source>
        <strain>IP32953</strain>
    </source>
</reference>